<evidence type="ECO:0000255" key="1">
    <source>
        <dbReference type="HAMAP-Rule" id="MF_01031"/>
    </source>
</evidence>
<sequence length="207" mass="22807">MEKFTVLTGIAAPLPMINIDTDMIIPKQFLKTIKRTGLGKNLFDEMRFLEDGAENPDFILNKAAWRKATILVTGANFGCGSSREHAPWALLDFGIRCVIAPSFADIFFNNCFKNGILPIALPQVEIDKLLDDAGRGSNATLTVDLENQVIRGPDGGQIAFEIDAFRKHCLLNGLDDIGLTLQKGDKIDDFERTRAMSSPWLPIAKAV</sequence>
<dbReference type="EC" id="4.2.1.33" evidence="1"/>
<dbReference type="EMBL" id="CP000230">
    <property type="protein sequence ID" value="ABC21991.1"/>
    <property type="molecule type" value="Genomic_DNA"/>
</dbReference>
<dbReference type="RefSeq" id="WP_011388945.1">
    <property type="nucleotide sequence ID" value="NC_007643.1"/>
</dbReference>
<dbReference type="RefSeq" id="YP_426278.1">
    <property type="nucleotide sequence ID" value="NC_007643.1"/>
</dbReference>
<dbReference type="SMR" id="Q2RV54"/>
<dbReference type="STRING" id="269796.Rru_A1190"/>
<dbReference type="EnsemblBacteria" id="ABC21991">
    <property type="protein sequence ID" value="ABC21991"/>
    <property type="gene ID" value="Rru_A1190"/>
</dbReference>
<dbReference type="KEGG" id="rru:Rru_A1190"/>
<dbReference type="PATRIC" id="fig|269796.9.peg.1254"/>
<dbReference type="eggNOG" id="COG0066">
    <property type="taxonomic scope" value="Bacteria"/>
</dbReference>
<dbReference type="HOGENOM" id="CLU_081378_0_3_5"/>
<dbReference type="PhylomeDB" id="Q2RV54"/>
<dbReference type="UniPathway" id="UPA00048">
    <property type="reaction ID" value="UER00071"/>
</dbReference>
<dbReference type="Proteomes" id="UP000001929">
    <property type="component" value="Chromosome"/>
</dbReference>
<dbReference type="GO" id="GO:0009316">
    <property type="term" value="C:3-isopropylmalate dehydratase complex"/>
    <property type="evidence" value="ECO:0007669"/>
    <property type="project" value="InterPro"/>
</dbReference>
<dbReference type="GO" id="GO:0003861">
    <property type="term" value="F:3-isopropylmalate dehydratase activity"/>
    <property type="evidence" value="ECO:0007669"/>
    <property type="project" value="UniProtKB-UniRule"/>
</dbReference>
<dbReference type="GO" id="GO:0009098">
    <property type="term" value="P:L-leucine biosynthetic process"/>
    <property type="evidence" value="ECO:0007669"/>
    <property type="project" value="UniProtKB-UniRule"/>
</dbReference>
<dbReference type="CDD" id="cd01577">
    <property type="entry name" value="IPMI_Swivel"/>
    <property type="match status" value="1"/>
</dbReference>
<dbReference type="FunFam" id="3.20.19.10:FF:000003">
    <property type="entry name" value="3-isopropylmalate dehydratase small subunit"/>
    <property type="match status" value="1"/>
</dbReference>
<dbReference type="Gene3D" id="3.20.19.10">
    <property type="entry name" value="Aconitase, domain 4"/>
    <property type="match status" value="1"/>
</dbReference>
<dbReference type="HAMAP" id="MF_01031">
    <property type="entry name" value="LeuD_type1"/>
    <property type="match status" value="1"/>
</dbReference>
<dbReference type="InterPro" id="IPR004431">
    <property type="entry name" value="3-IsopropMal_deHydase_ssu"/>
</dbReference>
<dbReference type="InterPro" id="IPR015928">
    <property type="entry name" value="Aconitase/3IPM_dehydase_swvl"/>
</dbReference>
<dbReference type="InterPro" id="IPR000573">
    <property type="entry name" value="AconitaseA/IPMdHydase_ssu_swvl"/>
</dbReference>
<dbReference type="InterPro" id="IPR033940">
    <property type="entry name" value="IPMI_Swivel"/>
</dbReference>
<dbReference type="InterPro" id="IPR050075">
    <property type="entry name" value="LeuD"/>
</dbReference>
<dbReference type="NCBIfam" id="TIGR00171">
    <property type="entry name" value="leuD"/>
    <property type="match status" value="1"/>
</dbReference>
<dbReference type="NCBIfam" id="NF002458">
    <property type="entry name" value="PRK01641.1"/>
    <property type="match status" value="1"/>
</dbReference>
<dbReference type="PANTHER" id="PTHR43345:SF5">
    <property type="entry name" value="3-ISOPROPYLMALATE DEHYDRATASE SMALL SUBUNIT"/>
    <property type="match status" value="1"/>
</dbReference>
<dbReference type="PANTHER" id="PTHR43345">
    <property type="entry name" value="3-ISOPROPYLMALATE DEHYDRATASE SMALL SUBUNIT 2-RELATED-RELATED"/>
    <property type="match status" value="1"/>
</dbReference>
<dbReference type="Pfam" id="PF00694">
    <property type="entry name" value="Aconitase_C"/>
    <property type="match status" value="1"/>
</dbReference>
<dbReference type="SUPFAM" id="SSF52016">
    <property type="entry name" value="LeuD/IlvD-like"/>
    <property type="match status" value="1"/>
</dbReference>
<accession>Q2RV54</accession>
<reference key="1">
    <citation type="journal article" date="2011" name="Stand. Genomic Sci.">
        <title>Complete genome sequence of Rhodospirillum rubrum type strain (S1).</title>
        <authorList>
            <person name="Munk A.C."/>
            <person name="Copeland A."/>
            <person name="Lucas S."/>
            <person name="Lapidus A."/>
            <person name="Del Rio T.G."/>
            <person name="Barry K."/>
            <person name="Detter J.C."/>
            <person name="Hammon N."/>
            <person name="Israni S."/>
            <person name="Pitluck S."/>
            <person name="Brettin T."/>
            <person name="Bruce D."/>
            <person name="Han C."/>
            <person name="Tapia R."/>
            <person name="Gilna P."/>
            <person name="Schmutz J."/>
            <person name="Larimer F."/>
            <person name="Land M."/>
            <person name="Kyrpides N.C."/>
            <person name="Mavromatis K."/>
            <person name="Richardson P."/>
            <person name="Rohde M."/>
            <person name="Goeker M."/>
            <person name="Klenk H.P."/>
            <person name="Zhang Y."/>
            <person name="Roberts G.P."/>
            <person name="Reslewic S."/>
            <person name="Schwartz D.C."/>
        </authorList>
    </citation>
    <scope>NUCLEOTIDE SEQUENCE [LARGE SCALE GENOMIC DNA]</scope>
    <source>
        <strain>ATCC 11170 / ATH 1.1.1 / DSM 467 / LMG 4362 / NCIMB 8255 / S1</strain>
    </source>
</reference>
<name>LEUD_RHORT</name>
<feature type="chain" id="PRO_1000063819" description="3-isopropylmalate dehydratase small subunit">
    <location>
        <begin position="1"/>
        <end position="207"/>
    </location>
</feature>
<comment type="function">
    <text evidence="1">Catalyzes the isomerization between 2-isopropylmalate and 3-isopropylmalate, via the formation of 2-isopropylmaleate.</text>
</comment>
<comment type="catalytic activity">
    <reaction evidence="1">
        <text>(2R,3S)-3-isopropylmalate = (2S)-2-isopropylmalate</text>
        <dbReference type="Rhea" id="RHEA:32287"/>
        <dbReference type="ChEBI" id="CHEBI:1178"/>
        <dbReference type="ChEBI" id="CHEBI:35121"/>
        <dbReference type="EC" id="4.2.1.33"/>
    </reaction>
</comment>
<comment type="pathway">
    <text evidence="1">Amino-acid biosynthesis; L-leucine biosynthesis; L-leucine from 3-methyl-2-oxobutanoate: step 2/4.</text>
</comment>
<comment type="subunit">
    <text evidence="1">Heterodimer of LeuC and LeuD.</text>
</comment>
<comment type="similarity">
    <text evidence="1">Belongs to the LeuD family. LeuD type 1 subfamily.</text>
</comment>
<gene>
    <name evidence="1" type="primary">leuD</name>
    <name type="ordered locus">Rru_A1190</name>
</gene>
<keyword id="KW-0028">Amino-acid biosynthesis</keyword>
<keyword id="KW-0100">Branched-chain amino acid biosynthesis</keyword>
<keyword id="KW-0432">Leucine biosynthesis</keyword>
<keyword id="KW-0456">Lyase</keyword>
<keyword id="KW-1185">Reference proteome</keyword>
<proteinExistence type="inferred from homology"/>
<protein>
    <recommendedName>
        <fullName evidence="1">3-isopropylmalate dehydratase small subunit</fullName>
        <ecNumber evidence="1">4.2.1.33</ecNumber>
    </recommendedName>
    <alternativeName>
        <fullName evidence="1">Alpha-IPM isomerase</fullName>
        <shortName evidence="1">IPMI</shortName>
    </alternativeName>
    <alternativeName>
        <fullName evidence="1">Isopropylmalate isomerase</fullName>
    </alternativeName>
</protein>
<organism>
    <name type="scientific">Rhodospirillum rubrum (strain ATCC 11170 / ATH 1.1.1 / DSM 467 / LMG 4362 / NCIMB 8255 / S1)</name>
    <dbReference type="NCBI Taxonomy" id="269796"/>
    <lineage>
        <taxon>Bacteria</taxon>
        <taxon>Pseudomonadati</taxon>
        <taxon>Pseudomonadota</taxon>
        <taxon>Alphaproteobacteria</taxon>
        <taxon>Rhodospirillales</taxon>
        <taxon>Rhodospirillaceae</taxon>
        <taxon>Rhodospirillum</taxon>
    </lineage>
</organism>